<keyword id="KW-0256">Endoplasmic reticulum</keyword>
<keyword id="KW-0931">ER-Golgi transport</keyword>
<keyword id="KW-0333">Golgi apparatus</keyword>
<keyword id="KW-0472">Membrane</keyword>
<keyword id="KW-1185">Reference proteome</keyword>
<keyword id="KW-0812">Transmembrane</keyword>
<keyword id="KW-1133">Transmembrane helix</keyword>
<keyword id="KW-0813">Transport</keyword>
<proteinExistence type="inferred from homology"/>
<sequence>MPSDREKQRILRERRQAKMAKGGASDRLNKILSQGSSVKTSAVSVLDQPQPADHDPEGMDISTIASKPTPEPELDIDAMLNSVLGGNMGAGGAANGDPGSDPFTQMMMNMMQGGGPEGMLGQEGGTNPMSANMEYQQQLIAYNLYQQRKVRHRFLVVRMVSILANFVYHFLTISDFSFSPSANPFIRSIPPTSSVSSFFQIFVAIEAVLVAAYIAASRNVPSNNNGLLVKGISMAAMFVPKLQRFQPLIMKIIGCWDTVTFVLNDLGLVVLLFGLISFRR</sequence>
<protein>
    <recommendedName>
        <fullName evidence="1">Golgi to ER traffic protein 2</fullName>
    </recommendedName>
</protein>
<organism>
    <name type="scientific">Meyerozyma guilliermondii (strain ATCC 6260 / CBS 566 / DSM 6381 / JCM 1539 / NBRC 10279 / NRRL Y-324)</name>
    <name type="common">Yeast</name>
    <name type="synonym">Candida guilliermondii</name>
    <dbReference type="NCBI Taxonomy" id="294746"/>
    <lineage>
        <taxon>Eukaryota</taxon>
        <taxon>Fungi</taxon>
        <taxon>Dikarya</taxon>
        <taxon>Ascomycota</taxon>
        <taxon>Saccharomycotina</taxon>
        <taxon>Pichiomycetes</taxon>
        <taxon>Debaryomycetaceae</taxon>
        <taxon>Meyerozyma</taxon>
    </lineage>
</organism>
<comment type="function">
    <text evidence="1">Required for the post-translational delivery of tail-anchored (TA) proteins to the endoplasmic reticulum. Together with GET1, acts as a membrane receptor for soluble GET3, which recognizes and selectively binds the transmembrane domain of TA proteins in the cytosol. The GET complex cooperates with the HDEL receptor ERD2 to mediate the ATP-dependent retrieval of resident ER proteins that contain a C-terminal H-D-E-L retention signal from the Golgi to the ER.</text>
</comment>
<comment type="subunit">
    <text evidence="1">Component of the Golgi to ER traffic (GET) complex, which is composed of GET1, GET2 and GET3. Within the complex, GET1 and GET2 form a heterotetramer which is stabilized by phosphatidylinositol binding and which binds to the GET3 homodimer.</text>
</comment>
<comment type="subcellular location">
    <subcellularLocation>
        <location evidence="1">Endoplasmic reticulum membrane</location>
        <topology evidence="1">Multi-pass membrane protein</topology>
    </subcellularLocation>
    <subcellularLocation>
        <location evidence="1">Golgi apparatus membrane</location>
        <topology evidence="1">Multi-pass membrane protein</topology>
    </subcellularLocation>
</comment>
<comment type="similarity">
    <text evidence="1">Belongs to the GET2 family.</text>
</comment>
<comment type="sequence caution" evidence="3">
    <conflict type="erroneous initiation">
        <sequence resource="EMBL-CDS" id="EDK37599"/>
    </conflict>
</comment>
<name>GET2_PICGU</name>
<gene>
    <name evidence="1" type="primary">GET2</name>
    <name type="ORF">PGUG_01697</name>
</gene>
<dbReference type="EMBL" id="CH408156">
    <property type="protein sequence ID" value="EDK37599.2"/>
    <property type="status" value="ALT_INIT"/>
    <property type="molecule type" value="Genomic_DNA"/>
</dbReference>
<dbReference type="RefSeq" id="XP_001486026.1">
    <property type="nucleotide sequence ID" value="XM_001485976.1"/>
</dbReference>
<dbReference type="SMR" id="A5DEJ6"/>
<dbReference type="FunCoup" id="A5DEJ6">
    <property type="interactions" value="56"/>
</dbReference>
<dbReference type="STRING" id="294746.A5DEJ6"/>
<dbReference type="GeneID" id="5127528"/>
<dbReference type="KEGG" id="pgu:PGUG_01697"/>
<dbReference type="eggNOG" id="ENOG502QW0H">
    <property type="taxonomic scope" value="Eukaryota"/>
</dbReference>
<dbReference type="HOGENOM" id="CLU_066477_0_0_1"/>
<dbReference type="InParanoid" id="A5DEJ6"/>
<dbReference type="OrthoDB" id="4097053at2759"/>
<dbReference type="Proteomes" id="UP000001997">
    <property type="component" value="Unassembled WGS sequence"/>
</dbReference>
<dbReference type="GO" id="GO:0005789">
    <property type="term" value="C:endoplasmic reticulum membrane"/>
    <property type="evidence" value="ECO:0007669"/>
    <property type="project" value="UniProtKB-SubCell"/>
</dbReference>
<dbReference type="GO" id="GO:0043529">
    <property type="term" value="C:GET complex"/>
    <property type="evidence" value="ECO:0007669"/>
    <property type="project" value="UniProtKB-UniRule"/>
</dbReference>
<dbReference type="GO" id="GO:0000139">
    <property type="term" value="C:Golgi membrane"/>
    <property type="evidence" value="ECO:0007669"/>
    <property type="project" value="UniProtKB-SubCell"/>
</dbReference>
<dbReference type="GO" id="GO:0045048">
    <property type="term" value="P:protein insertion into ER membrane"/>
    <property type="evidence" value="ECO:0007669"/>
    <property type="project" value="UniProtKB-UniRule"/>
</dbReference>
<dbReference type="GO" id="GO:0006890">
    <property type="term" value="P:retrograde vesicle-mediated transport, Golgi to endoplasmic reticulum"/>
    <property type="evidence" value="ECO:0007669"/>
    <property type="project" value="TreeGrafter"/>
</dbReference>
<dbReference type="HAMAP" id="MF_03114">
    <property type="entry name" value="Get2"/>
    <property type="match status" value="1"/>
</dbReference>
<dbReference type="InterPro" id="IPR014802">
    <property type="entry name" value="GET2"/>
</dbReference>
<dbReference type="InterPro" id="IPR028143">
    <property type="entry name" value="Get2/sif1"/>
</dbReference>
<dbReference type="PANTHER" id="PTHR28263">
    <property type="entry name" value="GOLGI TO ER TRAFFIC PROTEIN 2"/>
    <property type="match status" value="1"/>
</dbReference>
<dbReference type="PANTHER" id="PTHR28263:SF1">
    <property type="entry name" value="GOLGI TO ER TRAFFIC PROTEIN 2"/>
    <property type="match status" value="1"/>
</dbReference>
<dbReference type="Pfam" id="PF08690">
    <property type="entry name" value="GET2"/>
    <property type="match status" value="1"/>
</dbReference>
<evidence type="ECO:0000255" key="1">
    <source>
        <dbReference type="HAMAP-Rule" id="MF_03114"/>
    </source>
</evidence>
<evidence type="ECO:0000256" key="2">
    <source>
        <dbReference type="SAM" id="MobiDB-lite"/>
    </source>
</evidence>
<evidence type="ECO:0000305" key="3"/>
<accession>A5DEJ6</accession>
<feature type="chain" id="PRO_0000388635" description="Golgi to ER traffic protein 2">
    <location>
        <begin position="1"/>
        <end position="280"/>
    </location>
</feature>
<feature type="topological domain" description="Cytoplasmic" evidence="1">
    <location>
        <begin position="1"/>
        <end position="149"/>
    </location>
</feature>
<feature type="transmembrane region" description="Helical" evidence="1">
    <location>
        <begin position="150"/>
        <end position="170"/>
    </location>
</feature>
<feature type="topological domain" description="Lumenal" evidence="1">
    <location>
        <begin position="171"/>
        <end position="197"/>
    </location>
</feature>
<feature type="transmembrane region" description="Helical" evidence="1">
    <location>
        <begin position="198"/>
        <end position="217"/>
    </location>
</feature>
<feature type="topological domain" description="Cytoplasmic" evidence="1">
    <location>
        <begin position="218"/>
        <end position="257"/>
    </location>
</feature>
<feature type="transmembrane region" description="Helical" evidence="1">
    <location>
        <begin position="258"/>
        <end position="278"/>
    </location>
</feature>
<feature type="topological domain" description="Lumenal" evidence="1">
    <location>
        <begin position="279"/>
        <end position="280"/>
    </location>
</feature>
<feature type="region of interest" description="Disordered" evidence="2">
    <location>
        <begin position="15"/>
        <end position="59"/>
    </location>
</feature>
<feature type="compositionally biased region" description="Polar residues" evidence="2">
    <location>
        <begin position="31"/>
        <end position="43"/>
    </location>
</feature>
<reference key="1">
    <citation type="journal article" date="2009" name="Nature">
        <title>Evolution of pathogenicity and sexual reproduction in eight Candida genomes.</title>
        <authorList>
            <person name="Butler G."/>
            <person name="Rasmussen M.D."/>
            <person name="Lin M.F."/>
            <person name="Santos M.A.S."/>
            <person name="Sakthikumar S."/>
            <person name="Munro C.A."/>
            <person name="Rheinbay E."/>
            <person name="Grabherr M."/>
            <person name="Forche A."/>
            <person name="Reedy J.L."/>
            <person name="Agrafioti I."/>
            <person name="Arnaud M.B."/>
            <person name="Bates S."/>
            <person name="Brown A.J.P."/>
            <person name="Brunke S."/>
            <person name="Costanzo M.C."/>
            <person name="Fitzpatrick D.A."/>
            <person name="de Groot P.W.J."/>
            <person name="Harris D."/>
            <person name="Hoyer L.L."/>
            <person name="Hube B."/>
            <person name="Klis F.M."/>
            <person name="Kodira C."/>
            <person name="Lennard N."/>
            <person name="Logue M.E."/>
            <person name="Martin R."/>
            <person name="Neiman A.M."/>
            <person name="Nikolaou E."/>
            <person name="Quail M.A."/>
            <person name="Quinn J."/>
            <person name="Santos M.C."/>
            <person name="Schmitzberger F.F."/>
            <person name="Sherlock G."/>
            <person name="Shah P."/>
            <person name="Silverstein K.A.T."/>
            <person name="Skrzypek M.S."/>
            <person name="Soll D."/>
            <person name="Staggs R."/>
            <person name="Stansfield I."/>
            <person name="Stumpf M.P.H."/>
            <person name="Sudbery P.E."/>
            <person name="Srikantha T."/>
            <person name="Zeng Q."/>
            <person name="Berman J."/>
            <person name="Berriman M."/>
            <person name="Heitman J."/>
            <person name="Gow N.A.R."/>
            <person name="Lorenz M.C."/>
            <person name="Birren B.W."/>
            <person name="Kellis M."/>
            <person name="Cuomo C.A."/>
        </authorList>
    </citation>
    <scope>NUCLEOTIDE SEQUENCE [LARGE SCALE GENOMIC DNA]</scope>
    <source>
        <strain>ATCC 6260 / CBS 566 / DSM 6381 / JCM 1539 / NBRC 10279 / NRRL Y-324</strain>
    </source>
</reference>